<accession>Q2RLT8</accession>
<organism>
    <name type="scientific">Moorella thermoacetica (strain ATCC 39073 / JCM 9320)</name>
    <dbReference type="NCBI Taxonomy" id="264732"/>
    <lineage>
        <taxon>Bacteria</taxon>
        <taxon>Bacillati</taxon>
        <taxon>Bacillota</taxon>
        <taxon>Clostridia</taxon>
        <taxon>Moorellales</taxon>
        <taxon>Moorellaceae</taxon>
        <taxon>Moorella</taxon>
    </lineage>
</organism>
<feature type="chain" id="PRO_0000267055" description="Enolase">
    <location>
        <begin position="1"/>
        <end position="428"/>
    </location>
</feature>
<feature type="active site" description="Proton donor" evidence="1">
    <location>
        <position position="205"/>
    </location>
</feature>
<feature type="active site" description="Proton acceptor" evidence="1">
    <location>
        <position position="337"/>
    </location>
</feature>
<feature type="binding site" evidence="1">
    <location>
        <position position="163"/>
    </location>
    <ligand>
        <name>(2R)-2-phosphoglycerate</name>
        <dbReference type="ChEBI" id="CHEBI:58289"/>
    </ligand>
</feature>
<feature type="binding site" evidence="1">
    <location>
        <position position="242"/>
    </location>
    <ligand>
        <name>Mg(2+)</name>
        <dbReference type="ChEBI" id="CHEBI:18420"/>
    </ligand>
</feature>
<feature type="binding site" evidence="1">
    <location>
        <position position="285"/>
    </location>
    <ligand>
        <name>Mg(2+)</name>
        <dbReference type="ChEBI" id="CHEBI:18420"/>
    </ligand>
</feature>
<feature type="binding site" evidence="1">
    <location>
        <position position="312"/>
    </location>
    <ligand>
        <name>Mg(2+)</name>
        <dbReference type="ChEBI" id="CHEBI:18420"/>
    </ligand>
</feature>
<feature type="binding site" evidence="1">
    <location>
        <position position="337"/>
    </location>
    <ligand>
        <name>(2R)-2-phosphoglycerate</name>
        <dbReference type="ChEBI" id="CHEBI:58289"/>
    </ligand>
</feature>
<feature type="binding site" evidence="1">
    <location>
        <position position="366"/>
    </location>
    <ligand>
        <name>(2R)-2-phosphoglycerate</name>
        <dbReference type="ChEBI" id="CHEBI:58289"/>
    </ligand>
</feature>
<feature type="binding site" evidence="1">
    <location>
        <position position="367"/>
    </location>
    <ligand>
        <name>(2R)-2-phosphoglycerate</name>
        <dbReference type="ChEBI" id="CHEBI:58289"/>
    </ligand>
</feature>
<feature type="binding site" evidence="1">
    <location>
        <position position="388"/>
    </location>
    <ligand>
        <name>(2R)-2-phosphoglycerate</name>
        <dbReference type="ChEBI" id="CHEBI:58289"/>
    </ligand>
</feature>
<evidence type="ECO:0000255" key="1">
    <source>
        <dbReference type="HAMAP-Rule" id="MF_00318"/>
    </source>
</evidence>
<sequence length="428" mass="45830">MTTISDIYAREILDSRGNPTVEVEVFLESGGWGRAAVPSGASTGAYEAVELRDKDPKRYGGKGVLDAVNNINAIIAPELVGSDALDQREIDRQLIEMDGTPNKGKLGANAILGVSLAVAKAAADALGLPLYRYLGGVNAHTLPVPMMNILNGGKHADNNVDIQEFMVMPAGASDFASALRMGAEVFHSLKAVLQSKGLNTAVGDEGGFAPNLRSNVEAIEVLLEAIAKAGYEPGKDCFIALDPASTELYKDGKYVFAGEGVTRTSDEMVEFWASLVDKYPIISIEDGLAEDDWEGWQNLTKRLGHKVQLVGDDLFVTNTERLSRGIEMGAANAILIKVNQIGTLTETLEAIEMAKKAGYTAVVSHRSGETEDTTIADIVVAVNAGQIKTGAPSRTERVAKYNQLLRIEEELDAAALYPGLKAFYNLKK</sequence>
<protein>
    <recommendedName>
        <fullName evidence="1">Enolase</fullName>
        <ecNumber evidence="1">4.2.1.11</ecNumber>
    </recommendedName>
    <alternativeName>
        <fullName evidence="1">2-phospho-D-glycerate hydro-lyase</fullName>
    </alternativeName>
    <alternativeName>
        <fullName evidence="1">2-phosphoglycerate dehydratase</fullName>
    </alternativeName>
</protein>
<gene>
    <name evidence="1" type="primary">eno</name>
    <name type="ordered locus">Moth_0266</name>
</gene>
<name>ENO_MOOTA</name>
<proteinExistence type="inferred from homology"/>
<reference key="1">
    <citation type="journal article" date="2008" name="Environ. Microbiol.">
        <title>The complete genome sequence of Moorella thermoacetica (f. Clostridium thermoaceticum).</title>
        <authorList>
            <person name="Pierce E."/>
            <person name="Xie G."/>
            <person name="Barabote R.D."/>
            <person name="Saunders E."/>
            <person name="Han C.S."/>
            <person name="Detter J.C."/>
            <person name="Richardson P."/>
            <person name="Brettin T.S."/>
            <person name="Das A."/>
            <person name="Ljungdahl L.G."/>
            <person name="Ragsdale S.W."/>
        </authorList>
    </citation>
    <scope>NUCLEOTIDE SEQUENCE [LARGE SCALE GENOMIC DNA]</scope>
    <source>
        <strain>ATCC 39073 / JCM 9320</strain>
    </source>
</reference>
<keyword id="KW-0963">Cytoplasm</keyword>
<keyword id="KW-0324">Glycolysis</keyword>
<keyword id="KW-0456">Lyase</keyword>
<keyword id="KW-0460">Magnesium</keyword>
<keyword id="KW-0479">Metal-binding</keyword>
<keyword id="KW-0964">Secreted</keyword>
<dbReference type="EC" id="4.2.1.11" evidence="1"/>
<dbReference type="EMBL" id="CP000232">
    <property type="protein sequence ID" value="ABC18601.1"/>
    <property type="molecule type" value="Genomic_DNA"/>
</dbReference>
<dbReference type="RefSeq" id="YP_429144.1">
    <property type="nucleotide sequence ID" value="NC_007644.1"/>
</dbReference>
<dbReference type="SMR" id="Q2RLT8"/>
<dbReference type="STRING" id="264732.Moth_0266"/>
<dbReference type="EnsemblBacteria" id="ABC18601">
    <property type="protein sequence ID" value="ABC18601"/>
    <property type="gene ID" value="Moth_0266"/>
</dbReference>
<dbReference type="KEGG" id="mta:Moth_0266"/>
<dbReference type="PATRIC" id="fig|264732.11.peg.283"/>
<dbReference type="eggNOG" id="COG0148">
    <property type="taxonomic scope" value="Bacteria"/>
</dbReference>
<dbReference type="HOGENOM" id="CLU_031223_2_1_9"/>
<dbReference type="OrthoDB" id="9804716at2"/>
<dbReference type="UniPathway" id="UPA00109">
    <property type="reaction ID" value="UER00187"/>
</dbReference>
<dbReference type="GO" id="GO:0009986">
    <property type="term" value="C:cell surface"/>
    <property type="evidence" value="ECO:0007669"/>
    <property type="project" value="UniProtKB-SubCell"/>
</dbReference>
<dbReference type="GO" id="GO:0005576">
    <property type="term" value="C:extracellular region"/>
    <property type="evidence" value="ECO:0007669"/>
    <property type="project" value="UniProtKB-SubCell"/>
</dbReference>
<dbReference type="GO" id="GO:0000015">
    <property type="term" value="C:phosphopyruvate hydratase complex"/>
    <property type="evidence" value="ECO:0007669"/>
    <property type="project" value="InterPro"/>
</dbReference>
<dbReference type="GO" id="GO:0000287">
    <property type="term" value="F:magnesium ion binding"/>
    <property type="evidence" value="ECO:0007669"/>
    <property type="project" value="UniProtKB-UniRule"/>
</dbReference>
<dbReference type="GO" id="GO:0004634">
    <property type="term" value="F:phosphopyruvate hydratase activity"/>
    <property type="evidence" value="ECO:0007669"/>
    <property type="project" value="UniProtKB-UniRule"/>
</dbReference>
<dbReference type="GO" id="GO:0006096">
    <property type="term" value="P:glycolytic process"/>
    <property type="evidence" value="ECO:0007669"/>
    <property type="project" value="UniProtKB-UniRule"/>
</dbReference>
<dbReference type="CDD" id="cd03313">
    <property type="entry name" value="enolase"/>
    <property type="match status" value="1"/>
</dbReference>
<dbReference type="FunFam" id="3.20.20.120:FF:000001">
    <property type="entry name" value="Enolase"/>
    <property type="match status" value="1"/>
</dbReference>
<dbReference type="FunFam" id="3.30.390.10:FF:000001">
    <property type="entry name" value="Enolase"/>
    <property type="match status" value="1"/>
</dbReference>
<dbReference type="Gene3D" id="3.20.20.120">
    <property type="entry name" value="Enolase-like C-terminal domain"/>
    <property type="match status" value="1"/>
</dbReference>
<dbReference type="Gene3D" id="3.30.390.10">
    <property type="entry name" value="Enolase-like, N-terminal domain"/>
    <property type="match status" value="1"/>
</dbReference>
<dbReference type="HAMAP" id="MF_00318">
    <property type="entry name" value="Enolase"/>
    <property type="match status" value="1"/>
</dbReference>
<dbReference type="InterPro" id="IPR000941">
    <property type="entry name" value="Enolase"/>
</dbReference>
<dbReference type="InterPro" id="IPR036849">
    <property type="entry name" value="Enolase-like_C_sf"/>
</dbReference>
<dbReference type="InterPro" id="IPR029017">
    <property type="entry name" value="Enolase-like_N"/>
</dbReference>
<dbReference type="InterPro" id="IPR020810">
    <property type="entry name" value="Enolase_C"/>
</dbReference>
<dbReference type="InterPro" id="IPR020809">
    <property type="entry name" value="Enolase_CS"/>
</dbReference>
<dbReference type="InterPro" id="IPR020811">
    <property type="entry name" value="Enolase_N"/>
</dbReference>
<dbReference type="NCBIfam" id="TIGR01060">
    <property type="entry name" value="eno"/>
    <property type="match status" value="1"/>
</dbReference>
<dbReference type="PANTHER" id="PTHR11902">
    <property type="entry name" value="ENOLASE"/>
    <property type="match status" value="1"/>
</dbReference>
<dbReference type="PANTHER" id="PTHR11902:SF1">
    <property type="entry name" value="ENOLASE"/>
    <property type="match status" value="1"/>
</dbReference>
<dbReference type="Pfam" id="PF00113">
    <property type="entry name" value="Enolase_C"/>
    <property type="match status" value="1"/>
</dbReference>
<dbReference type="Pfam" id="PF03952">
    <property type="entry name" value="Enolase_N"/>
    <property type="match status" value="1"/>
</dbReference>
<dbReference type="PIRSF" id="PIRSF001400">
    <property type="entry name" value="Enolase"/>
    <property type="match status" value="1"/>
</dbReference>
<dbReference type="PRINTS" id="PR00148">
    <property type="entry name" value="ENOLASE"/>
</dbReference>
<dbReference type="SFLD" id="SFLDF00002">
    <property type="entry name" value="enolase"/>
    <property type="match status" value="1"/>
</dbReference>
<dbReference type="SFLD" id="SFLDG00178">
    <property type="entry name" value="enolase"/>
    <property type="match status" value="1"/>
</dbReference>
<dbReference type="SMART" id="SM01192">
    <property type="entry name" value="Enolase_C"/>
    <property type="match status" value="1"/>
</dbReference>
<dbReference type="SMART" id="SM01193">
    <property type="entry name" value="Enolase_N"/>
    <property type="match status" value="1"/>
</dbReference>
<dbReference type="SUPFAM" id="SSF51604">
    <property type="entry name" value="Enolase C-terminal domain-like"/>
    <property type="match status" value="1"/>
</dbReference>
<dbReference type="SUPFAM" id="SSF54826">
    <property type="entry name" value="Enolase N-terminal domain-like"/>
    <property type="match status" value="1"/>
</dbReference>
<dbReference type="PROSITE" id="PS00164">
    <property type="entry name" value="ENOLASE"/>
    <property type="match status" value="1"/>
</dbReference>
<comment type="function">
    <text evidence="1">Catalyzes the reversible conversion of 2-phosphoglycerate (2-PG) into phosphoenolpyruvate (PEP). It is essential for the degradation of carbohydrates via glycolysis.</text>
</comment>
<comment type="catalytic activity">
    <reaction evidence="1">
        <text>(2R)-2-phosphoglycerate = phosphoenolpyruvate + H2O</text>
        <dbReference type="Rhea" id="RHEA:10164"/>
        <dbReference type="ChEBI" id="CHEBI:15377"/>
        <dbReference type="ChEBI" id="CHEBI:58289"/>
        <dbReference type="ChEBI" id="CHEBI:58702"/>
        <dbReference type="EC" id="4.2.1.11"/>
    </reaction>
</comment>
<comment type="cofactor">
    <cofactor evidence="1">
        <name>Mg(2+)</name>
        <dbReference type="ChEBI" id="CHEBI:18420"/>
    </cofactor>
    <text evidence="1">Binds a second Mg(2+) ion via substrate during catalysis.</text>
</comment>
<comment type="pathway">
    <text evidence="1">Carbohydrate degradation; glycolysis; pyruvate from D-glyceraldehyde 3-phosphate: step 4/5.</text>
</comment>
<comment type="subcellular location">
    <subcellularLocation>
        <location evidence="1">Cytoplasm</location>
    </subcellularLocation>
    <subcellularLocation>
        <location evidence="1">Secreted</location>
    </subcellularLocation>
    <subcellularLocation>
        <location evidence="1">Cell surface</location>
    </subcellularLocation>
    <text evidence="1">Fractions of enolase are present in both the cytoplasm and on the cell surface.</text>
</comment>
<comment type="similarity">
    <text evidence="1">Belongs to the enolase family.</text>
</comment>